<name>MEMA_METCA</name>
<reference key="1">
    <citation type="journal article" date="1990" name="Gene">
        <title>The methane monooxygenase gene cluster of Methylococcus capsulatus (Bath).</title>
        <authorList>
            <person name="Stainthorpe A.C."/>
            <person name="Lees V."/>
            <person name="Salmond G.P.C."/>
            <person name="Dalton H."/>
            <person name="Murrell J.C."/>
        </authorList>
    </citation>
    <scope>NUCLEOTIDE SEQUENCE [GENOMIC DNA]</scope>
    <scope>PROTEIN SEQUENCE OF 1-6</scope>
    <source>
        <strain>ATCC 33009 / NCIMB 11132 / Bath</strain>
    </source>
</reference>
<reference key="2">
    <citation type="submission" date="2000-05" db="EMBL/GenBank/DDBJ databases">
        <authorList>
            <person name="McDonald I."/>
            <person name="Murrell J.C."/>
        </authorList>
    </citation>
    <scope>SEQUENCE REVISION TO 84; 306 AND 444</scope>
</reference>
<reference key="3">
    <citation type="journal article" date="2004" name="PLoS Biol.">
        <title>Genomic insights into methanotrophy: the complete genome sequence of Methylococcus capsulatus (Bath).</title>
        <authorList>
            <person name="Ward N.L."/>
            <person name="Larsen O."/>
            <person name="Sakwa J."/>
            <person name="Bruseth L."/>
            <person name="Khouri H.M."/>
            <person name="Durkin A.S."/>
            <person name="Dimitrov G."/>
            <person name="Jiang L."/>
            <person name="Scanlan D."/>
            <person name="Kang K.H."/>
            <person name="Lewis M.R."/>
            <person name="Nelson K.E."/>
            <person name="Methe B.A."/>
            <person name="Wu M."/>
            <person name="Heidelberg J.F."/>
            <person name="Paulsen I.T."/>
            <person name="Fouts D.E."/>
            <person name="Ravel J."/>
            <person name="Tettelin H."/>
            <person name="Ren Q."/>
            <person name="Read T.D."/>
            <person name="DeBoy R.T."/>
            <person name="Seshadri R."/>
            <person name="Salzberg S.L."/>
            <person name="Jensen H.B."/>
            <person name="Birkeland N.K."/>
            <person name="Nelson W.C."/>
            <person name="Dodson R.J."/>
            <person name="Grindhaug S.H."/>
            <person name="Holt I.E."/>
            <person name="Eidhammer I."/>
            <person name="Jonasen I."/>
            <person name="Vanaken S."/>
            <person name="Utterback T.R."/>
            <person name="Feldblyum T.V."/>
            <person name="Fraser C.M."/>
            <person name="Lillehaug J.R."/>
            <person name="Eisen J.A."/>
        </authorList>
    </citation>
    <scope>NUCLEOTIDE SEQUENCE [LARGE SCALE GENOMIC DNA]</scope>
    <source>
        <strain>ATCC 33009 / NCIMB 11132 / Bath</strain>
    </source>
</reference>
<reference key="4">
    <citation type="journal article" date="1993" name="Nature">
        <title>Crystal structure of a bacterial non-haem iron hydroxylase that catalyses the biological oxidation of methane.</title>
        <authorList>
            <person name="Rosenzweig A.C."/>
            <person name="Frederick C.A."/>
            <person name="Lippard S.J."/>
            <person name="Nordlund P."/>
        </authorList>
    </citation>
    <scope>X-RAY CRYSTALLOGRAPHY (2.2 ANGSTROMS)</scope>
</reference>
<reference key="5">
    <citation type="journal article" date="1995" name="Chem. Biol.">
        <title>Geometry of the soluble methane monooxygenase catalytic diiron center in two oxidation states.</title>
        <authorList>
            <person name="Rosenzweig A.C."/>
            <person name="Nordlund P."/>
            <person name="Takahara P.M."/>
            <person name="Frederick C.A."/>
            <person name="Lippard S.J."/>
        </authorList>
    </citation>
    <scope>X-RAY CRYSTALLOGRAPHY (1.7 ANGSTROMS)</scope>
</reference>
<reference key="6">
    <citation type="journal article" date="1997" name="Proteins">
        <title>Crystal structures of the methane monooxygenase hydroxylase from Methylococcus capsulatus (Bath): implications for substrate gating and component interactions.</title>
        <authorList>
            <person name="Rosenzweig A.C."/>
            <person name="Brandstetter H."/>
            <person name="Whittington D.A."/>
            <person name="Nordlund P."/>
            <person name="Lippard S.J."/>
            <person name="Frederick C.A."/>
        </authorList>
    </citation>
    <scope>X-RAY CRYSTALLOGRAPHY (1.7 ANGSTROMS)</scope>
    <source>
        <strain>ATCC 33009 / NCIMB 11132 / Bath</strain>
    </source>
</reference>
<reference key="7">
    <citation type="journal article" date="2001" name="J. Am. Chem. Soc.">
        <title>Crystal structures of the soluble methane monooxygenase hydroxylase from Methylococcus capsulatus (Bath) demonstrating geometrical variability at the dinuclear iron active site.</title>
        <authorList>
            <person name="Whittington D.A."/>
            <person name="Lippard S.J."/>
        </authorList>
    </citation>
    <scope>X-RAY CRYSTALLOGRAPHY (1.96 ANGSTROMS)</scope>
    <source>
        <strain>ATCC 33009 / NCIMB 11132 / Bath</strain>
    </source>
</reference>
<feature type="chain" id="PRO_0000096405" description="Methane monooxygenase component A alpha chain">
    <location>
        <begin position="1"/>
        <end position="527"/>
    </location>
</feature>
<feature type="active site" evidence="1">
    <location>
        <position position="151"/>
    </location>
</feature>
<feature type="binding site">
    <location>
        <position position="114"/>
    </location>
    <ligand>
        <name>Fe cation</name>
        <dbReference type="ChEBI" id="CHEBI:24875"/>
        <label>1</label>
    </ligand>
</feature>
<feature type="binding site">
    <location>
        <position position="144"/>
    </location>
    <ligand>
        <name>Fe cation</name>
        <dbReference type="ChEBI" id="CHEBI:24875"/>
        <label>1</label>
    </ligand>
</feature>
<feature type="binding site">
    <location>
        <position position="147"/>
    </location>
    <ligand>
        <name>Fe cation</name>
        <dbReference type="ChEBI" id="CHEBI:24875"/>
        <label>1</label>
    </ligand>
</feature>
<feature type="binding site">
    <location>
        <position position="209"/>
    </location>
    <ligand>
        <name>Fe cation</name>
        <dbReference type="ChEBI" id="CHEBI:24875"/>
        <label>2</label>
    </ligand>
</feature>
<feature type="binding site">
    <location>
        <position position="243"/>
    </location>
    <ligand>
        <name>Fe cation</name>
        <dbReference type="ChEBI" id="CHEBI:24875"/>
        <label>2</label>
    </ligand>
</feature>
<feature type="binding site">
    <location>
        <position position="246"/>
    </location>
    <ligand>
        <name>Fe cation</name>
        <dbReference type="ChEBI" id="CHEBI:24875"/>
        <label>2</label>
    </ligand>
</feature>
<feature type="sequence conflict" description="In Ref. 2; AAB62392." evidence="2" ref="2">
    <original>N</original>
    <variation>D</variation>
    <location>
        <position position="306"/>
    </location>
</feature>
<feature type="sequence conflict" description="In Ref. 2; AAB62392." evidence="2" ref="2">
    <original>Q</original>
    <variation>E</variation>
    <location>
        <position position="444"/>
    </location>
</feature>
<feature type="helix" evidence="3">
    <location>
        <begin position="25"/>
        <end position="29"/>
    </location>
</feature>
<feature type="helix" evidence="3">
    <location>
        <begin position="30"/>
        <end position="35"/>
    </location>
</feature>
<feature type="helix" evidence="3">
    <location>
        <begin position="64"/>
        <end position="83"/>
    </location>
</feature>
<feature type="helix" evidence="3">
    <location>
        <begin position="85"/>
        <end position="88"/>
    </location>
</feature>
<feature type="turn" evidence="3">
    <location>
        <begin position="89"/>
        <end position="93"/>
    </location>
</feature>
<feature type="helix" evidence="3">
    <location>
        <begin position="97"/>
        <end position="127"/>
    </location>
</feature>
<feature type="helix" evidence="3">
    <location>
        <begin position="131"/>
        <end position="161"/>
    </location>
</feature>
<feature type="turn" evidence="3">
    <location>
        <begin position="166"/>
        <end position="170"/>
    </location>
</feature>
<feature type="helix" evidence="3">
    <location>
        <begin position="171"/>
        <end position="174"/>
    </location>
</feature>
<feature type="helix" evidence="3">
    <location>
        <begin position="175"/>
        <end position="177"/>
    </location>
</feature>
<feature type="helix" evidence="3">
    <location>
        <begin position="180"/>
        <end position="188"/>
    </location>
</feature>
<feature type="helix" evidence="3">
    <location>
        <begin position="190"/>
        <end position="193"/>
    </location>
</feature>
<feature type="helix" evidence="3">
    <location>
        <begin position="197"/>
        <end position="204"/>
    </location>
</feature>
<feature type="turn" evidence="3">
    <location>
        <begin position="205"/>
        <end position="207"/>
    </location>
</feature>
<feature type="helix" evidence="3">
    <location>
        <begin position="208"/>
        <end position="211"/>
    </location>
</feature>
<feature type="helix" evidence="3">
    <location>
        <begin position="213"/>
        <end position="226"/>
    </location>
</feature>
<feature type="helix" evidence="3">
    <location>
        <begin position="231"/>
        <end position="257"/>
    </location>
</feature>
<feature type="strand" evidence="4">
    <location>
        <begin position="258"/>
        <end position="260"/>
    </location>
</feature>
<feature type="helix" evidence="3">
    <location>
        <begin position="262"/>
        <end position="292"/>
    </location>
</feature>
<feature type="helix" evidence="3">
    <location>
        <begin position="301"/>
        <end position="309"/>
    </location>
</feature>
<feature type="helix" evidence="3">
    <location>
        <begin position="310"/>
        <end position="315"/>
    </location>
</feature>
<feature type="helix" evidence="3">
    <location>
        <begin position="316"/>
        <end position="319"/>
    </location>
</feature>
<feature type="helix" evidence="3">
    <location>
        <begin position="320"/>
        <end position="324"/>
    </location>
</feature>
<feature type="helix" evidence="3">
    <location>
        <begin position="332"/>
        <end position="339"/>
    </location>
</feature>
<feature type="helix" evidence="3">
    <location>
        <begin position="342"/>
        <end position="352"/>
    </location>
</feature>
<feature type="helix" evidence="3">
    <location>
        <begin position="354"/>
        <end position="356"/>
    </location>
</feature>
<feature type="strand" evidence="3">
    <location>
        <begin position="357"/>
        <end position="360"/>
    </location>
</feature>
<feature type="helix" evidence="3">
    <location>
        <begin position="366"/>
        <end position="375"/>
    </location>
</feature>
<feature type="helix" evidence="3">
    <location>
        <begin position="379"/>
        <end position="392"/>
    </location>
</feature>
<feature type="turn" evidence="3">
    <location>
        <begin position="393"/>
        <end position="396"/>
    </location>
</feature>
<feature type="helix" evidence="6">
    <location>
        <begin position="398"/>
        <end position="400"/>
    </location>
</feature>
<feature type="helix" evidence="3">
    <location>
        <begin position="405"/>
        <end position="410"/>
    </location>
</feature>
<feature type="turn" evidence="3">
    <location>
        <begin position="419"/>
        <end position="421"/>
    </location>
</feature>
<feature type="turn" evidence="3">
    <location>
        <begin position="427"/>
        <end position="429"/>
    </location>
</feature>
<feature type="strand" evidence="5">
    <location>
        <begin position="431"/>
        <end position="433"/>
    </location>
</feature>
<feature type="strand" evidence="3">
    <location>
        <begin position="437"/>
        <end position="441"/>
    </location>
</feature>
<feature type="strand" evidence="3">
    <location>
        <begin position="444"/>
        <end position="450"/>
    </location>
</feature>
<feature type="helix" evidence="3">
    <location>
        <begin position="451"/>
        <end position="459"/>
    </location>
</feature>
<feature type="helix" evidence="3">
    <location>
        <begin position="461"/>
        <end position="463"/>
    </location>
</feature>
<feature type="helix" evidence="3">
    <location>
        <begin position="469"/>
        <end position="472"/>
    </location>
</feature>
<feature type="turn" evidence="7">
    <location>
        <begin position="473"/>
        <end position="475"/>
    </location>
</feature>
<feature type="helix" evidence="3">
    <location>
        <begin position="478"/>
        <end position="484"/>
    </location>
</feature>
<feature type="strand" evidence="3">
    <location>
        <begin position="492"/>
        <end position="496"/>
    </location>
</feature>
<feature type="strand" evidence="3">
    <location>
        <begin position="498"/>
        <end position="500"/>
    </location>
</feature>
<feature type="strand" evidence="3">
    <location>
        <begin position="503"/>
        <end position="505"/>
    </location>
</feature>
<feature type="helix" evidence="3">
    <location>
        <begin position="509"/>
        <end position="513"/>
    </location>
</feature>
<feature type="turn" evidence="3">
    <location>
        <begin position="514"/>
        <end position="516"/>
    </location>
</feature>
<feature type="helix" evidence="3">
    <location>
        <begin position="522"/>
        <end position="525"/>
    </location>
</feature>
<proteinExistence type="evidence at protein level"/>
<accession>P22869</accession>
<accession>Q609N8</accession>
<keyword id="KW-0002">3D-structure</keyword>
<keyword id="KW-0903">Direct protein sequencing</keyword>
<keyword id="KW-0408">Iron</keyword>
<keyword id="KW-0479">Metal-binding</keyword>
<keyword id="KW-0503">Monooxygenase</keyword>
<keyword id="KW-0521">NADP</keyword>
<keyword id="KW-0554">One-carbon metabolism</keyword>
<keyword id="KW-0560">Oxidoreductase</keyword>
<keyword id="KW-1185">Reference proteome</keyword>
<gene>
    <name type="primary">mmoX</name>
    <name type="ordered locus">MCA1194</name>
</gene>
<organism>
    <name type="scientific">Methylococcus capsulatus (strain ATCC 33009 / NCIMB 11132 / Bath)</name>
    <dbReference type="NCBI Taxonomy" id="243233"/>
    <lineage>
        <taxon>Bacteria</taxon>
        <taxon>Pseudomonadati</taxon>
        <taxon>Pseudomonadota</taxon>
        <taxon>Gammaproteobacteria</taxon>
        <taxon>Methylococcales</taxon>
        <taxon>Methylococcaceae</taxon>
        <taxon>Methylococcus</taxon>
    </lineage>
</organism>
<comment type="function">
    <text>Responsible for the initial oxygenation of methane to methanol in methanotrophs. It also catalyzes the monohydroxylation of a variety of unactivated alkenes, alicyclic, aromatic and heterocyclic compounds.</text>
</comment>
<comment type="catalytic activity">
    <reaction>
        <text>methane + NADH + O2 + H(+) = methanol + NAD(+) + H2O</text>
        <dbReference type="Rhea" id="RHEA:13637"/>
        <dbReference type="ChEBI" id="CHEBI:15377"/>
        <dbReference type="ChEBI" id="CHEBI:15378"/>
        <dbReference type="ChEBI" id="CHEBI:15379"/>
        <dbReference type="ChEBI" id="CHEBI:16183"/>
        <dbReference type="ChEBI" id="CHEBI:17790"/>
        <dbReference type="ChEBI" id="CHEBI:57540"/>
        <dbReference type="ChEBI" id="CHEBI:57945"/>
        <dbReference type="EC" id="1.14.13.25"/>
    </reaction>
</comment>
<comment type="catalytic activity">
    <reaction>
        <text>methane + NADPH + O2 + H(+) = methanol + NADP(+) + H2O</text>
        <dbReference type="Rhea" id="RHEA:13641"/>
        <dbReference type="ChEBI" id="CHEBI:15377"/>
        <dbReference type="ChEBI" id="CHEBI:15378"/>
        <dbReference type="ChEBI" id="CHEBI:15379"/>
        <dbReference type="ChEBI" id="CHEBI:16183"/>
        <dbReference type="ChEBI" id="CHEBI:17790"/>
        <dbReference type="ChEBI" id="CHEBI:57783"/>
        <dbReference type="ChEBI" id="CHEBI:58349"/>
        <dbReference type="EC" id="1.14.13.25"/>
    </reaction>
</comment>
<comment type="cofactor">
    <cofactor>
        <name>Fe cation</name>
        <dbReference type="ChEBI" id="CHEBI:24875"/>
    </cofactor>
    <text>Binds 2 iron ions.</text>
</comment>
<comment type="subunit">
    <text>M.capsulatus has two forms of methane monooxygenase, a soluble and a membrane-bound type. The soluble type consists of four components (A to D): protein A, comprising three chains, in an alpha-2, beta-2, gamma-2 configuration, is a nonheme iron protein containing an unusual mu-hydroxo bridge structure at its active site and interacts with both oxygen and methane.</text>
</comment>
<comment type="interaction">
    <interactant intactId="EBI-9023796">
        <id>P22869</id>
    </interactant>
    <interactant intactId="EBI-9023802">
        <id>P18798</id>
        <label>mmoY</label>
    </interactant>
    <organismsDiffer>false</organismsDiffer>
    <experiments>5</experiments>
</comment>
<comment type="similarity">
    <text evidence="2">Belongs to the TmoA/XamoA family.</text>
</comment>
<evidence type="ECO:0000255" key="1"/>
<evidence type="ECO:0000305" key="2"/>
<evidence type="ECO:0007829" key="3">
    <source>
        <dbReference type="PDB" id="1MTY"/>
    </source>
</evidence>
<evidence type="ECO:0007829" key="4">
    <source>
        <dbReference type="PDB" id="1XMF"/>
    </source>
</evidence>
<evidence type="ECO:0007829" key="5">
    <source>
        <dbReference type="PDB" id="1XMG"/>
    </source>
</evidence>
<evidence type="ECO:0007829" key="6">
    <source>
        <dbReference type="PDB" id="1XVB"/>
    </source>
</evidence>
<evidence type="ECO:0007829" key="7">
    <source>
        <dbReference type="PDB" id="7TC7"/>
    </source>
</evidence>
<dbReference type="EC" id="1.14.13.25"/>
<dbReference type="EMBL" id="M90050">
    <property type="protein sequence ID" value="AAB62392.3"/>
    <property type="molecule type" value="Genomic_DNA"/>
</dbReference>
<dbReference type="EMBL" id="AE017282">
    <property type="protein sequence ID" value="AAU92736.1"/>
    <property type="molecule type" value="Genomic_DNA"/>
</dbReference>
<dbReference type="PIR" id="JQ0702">
    <property type="entry name" value="JQ0702"/>
</dbReference>
<dbReference type="RefSeq" id="WP_010960482.1">
    <property type="nucleotide sequence ID" value="NC_002977.6"/>
</dbReference>
<dbReference type="PDB" id="1FYZ">
    <property type="method" value="X-ray"/>
    <property type="resolution" value="2.15 A"/>
    <property type="chains" value="A/B=1-527"/>
</dbReference>
<dbReference type="PDB" id="1FZ0">
    <property type="method" value="X-ray"/>
    <property type="resolution" value="2.07 A"/>
    <property type="chains" value="A/B=1-527"/>
</dbReference>
<dbReference type="PDB" id="1FZ1">
    <property type="method" value="X-ray"/>
    <property type="resolution" value="1.96 A"/>
    <property type="chains" value="A/B=1-527"/>
</dbReference>
<dbReference type="PDB" id="1FZ2">
    <property type="method" value="X-ray"/>
    <property type="resolution" value="2.15 A"/>
    <property type="chains" value="A/B=1-527"/>
</dbReference>
<dbReference type="PDB" id="1FZ3">
    <property type="method" value="X-ray"/>
    <property type="resolution" value="2.03 A"/>
    <property type="chains" value="A/B=1-527"/>
</dbReference>
<dbReference type="PDB" id="1FZ4">
    <property type="method" value="X-ray"/>
    <property type="resolution" value="2.38 A"/>
    <property type="chains" value="A/B=1-527"/>
</dbReference>
<dbReference type="PDB" id="1FZ5">
    <property type="method" value="X-ray"/>
    <property type="resolution" value="2.40 A"/>
    <property type="chains" value="A/B=1-527"/>
</dbReference>
<dbReference type="PDB" id="1FZ6">
    <property type="method" value="X-ray"/>
    <property type="resolution" value="2.05 A"/>
    <property type="chains" value="A/B=1-527"/>
</dbReference>
<dbReference type="PDB" id="1FZ7">
    <property type="method" value="X-ray"/>
    <property type="resolution" value="1.96 A"/>
    <property type="chains" value="A/B=1-527"/>
</dbReference>
<dbReference type="PDB" id="1FZ8">
    <property type="method" value="X-ray"/>
    <property type="resolution" value="2.10 A"/>
    <property type="chains" value="A/B=1-527"/>
</dbReference>
<dbReference type="PDB" id="1FZ9">
    <property type="method" value="X-ray"/>
    <property type="resolution" value="2.30 A"/>
    <property type="chains" value="A/B=1-527"/>
</dbReference>
<dbReference type="PDB" id="1FZH">
    <property type="method" value="X-ray"/>
    <property type="resolution" value="2.60 A"/>
    <property type="chains" value="A/B=1-527"/>
</dbReference>
<dbReference type="PDB" id="1FZI">
    <property type="method" value="X-ray"/>
    <property type="resolution" value="3.30 A"/>
    <property type="chains" value="A/B=1-527"/>
</dbReference>
<dbReference type="PDB" id="1MMO">
    <property type="method" value="X-ray"/>
    <property type="resolution" value="2.20 A"/>
    <property type="chains" value="D/E=15-526"/>
</dbReference>
<dbReference type="PDB" id="1MTY">
    <property type="method" value="X-ray"/>
    <property type="resolution" value="1.70 A"/>
    <property type="chains" value="D/E=15-526"/>
</dbReference>
<dbReference type="PDB" id="1XMF">
    <property type="method" value="X-ray"/>
    <property type="resolution" value="2.32 A"/>
    <property type="chains" value="A/B=1-527"/>
</dbReference>
<dbReference type="PDB" id="1XMG">
    <property type="method" value="X-ray"/>
    <property type="resolution" value="2.10 A"/>
    <property type="chains" value="A/B=1-527"/>
</dbReference>
<dbReference type="PDB" id="1XMH">
    <property type="method" value="X-ray"/>
    <property type="resolution" value="2.32 A"/>
    <property type="chains" value="A/B=1-527"/>
</dbReference>
<dbReference type="PDB" id="1XU3">
    <property type="method" value="X-ray"/>
    <property type="resolution" value="2.30 A"/>
    <property type="chains" value="A/B=1-527"/>
</dbReference>
<dbReference type="PDB" id="1XU5">
    <property type="method" value="X-ray"/>
    <property type="resolution" value="1.96 A"/>
    <property type="chains" value="A/B=1-527"/>
</dbReference>
<dbReference type="PDB" id="1XVB">
    <property type="method" value="X-ray"/>
    <property type="resolution" value="1.80 A"/>
    <property type="chains" value="A/B=1-527"/>
</dbReference>
<dbReference type="PDB" id="1XVC">
    <property type="method" value="X-ray"/>
    <property type="resolution" value="2.00 A"/>
    <property type="chains" value="A/B=1-527"/>
</dbReference>
<dbReference type="PDB" id="1XVD">
    <property type="method" value="X-ray"/>
    <property type="resolution" value="2.30 A"/>
    <property type="chains" value="A/B=1-527"/>
</dbReference>
<dbReference type="PDB" id="1XVE">
    <property type="method" value="X-ray"/>
    <property type="resolution" value="2.40 A"/>
    <property type="chains" value="A/B=1-527"/>
</dbReference>
<dbReference type="PDB" id="1XVF">
    <property type="method" value="X-ray"/>
    <property type="resolution" value="2.00 A"/>
    <property type="chains" value="A/B=1-527"/>
</dbReference>
<dbReference type="PDB" id="1XVG">
    <property type="method" value="X-ray"/>
    <property type="resolution" value="1.96 A"/>
    <property type="chains" value="A/B=1-527"/>
</dbReference>
<dbReference type="PDB" id="4GAM">
    <property type="method" value="X-ray"/>
    <property type="resolution" value="2.90 A"/>
    <property type="chains" value="A/F/K/P=1-527"/>
</dbReference>
<dbReference type="PDB" id="7TC7">
    <property type="method" value="EM"/>
    <property type="resolution" value="2.90 A"/>
    <property type="chains" value="D/E=1-527"/>
</dbReference>
<dbReference type="PDB" id="7TC8">
    <property type="method" value="EM"/>
    <property type="resolution" value="2.40 A"/>
    <property type="chains" value="D/E=1-527"/>
</dbReference>
<dbReference type="PDBsum" id="1FYZ"/>
<dbReference type="PDBsum" id="1FZ0"/>
<dbReference type="PDBsum" id="1FZ1"/>
<dbReference type="PDBsum" id="1FZ2"/>
<dbReference type="PDBsum" id="1FZ3"/>
<dbReference type="PDBsum" id="1FZ4"/>
<dbReference type="PDBsum" id="1FZ5"/>
<dbReference type="PDBsum" id="1FZ6"/>
<dbReference type="PDBsum" id="1FZ7"/>
<dbReference type="PDBsum" id="1FZ8"/>
<dbReference type="PDBsum" id="1FZ9"/>
<dbReference type="PDBsum" id="1FZH"/>
<dbReference type="PDBsum" id="1FZI"/>
<dbReference type="PDBsum" id="1MMO"/>
<dbReference type="PDBsum" id="1MTY"/>
<dbReference type="PDBsum" id="1XMF"/>
<dbReference type="PDBsum" id="1XMG"/>
<dbReference type="PDBsum" id="1XMH"/>
<dbReference type="PDBsum" id="1XU3"/>
<dbReference type="PDBsum" id="1XU5"/>
<dbReference type="PDBsum" id="1XVB"/>
<dbReference type="PDBsum" id="1XVC"/>
<dbReference type="PDBsum" id="1XVD"/>
<dbReference type="PDBsum" id="1XVE"/>
<dbReference type="PDBsum" id="1XVF"/>
<dbReference type="PDBsum" id="1XVG"/>
<dbReference type="PDBsum" id="4GAM"/>
<dbReference type="PDBsum" id="7TC7"/>
<dbReference type="PDBsum" id="7TC8"/>
<dbReference type="BMRB" id="P22869"/>
<dbReference type="EMDB" id="EMD-25804"/>
<dbReference type="EMDB" id="EMD-25805"/>
<dbReference type="SMR" id="P22869"/>
<dbReference type="DIP" id="DIP-59861N"/>
<dbReference type="IntAct" id="P22869">
    <property type="interactions" value="3"/>
</dbReference>
<dbReference type="STRING" id="243233.MCA1194"/>
<dbReference type="DrugBank" id="DB04592">
    <property type="generic name" value="3-Bromo-3-buten-1-ol"/>
</dbReference>
<dbReference type="DrugBank" id="DB04637">
    <property type="generic name" value="6-Bromo-1-hexanol"/>
</dbReference>
<dbReference type="GeneID" id="88223481"/>
<dbReference type="KEGG" id="mca:MCA1194"/>
<dbReference type="eggNOG" id="COG3350">
    <property type="taxonomic scope" value="Bacteria"/>
</dbReference>
<dbReference type="HOGENOM" id="CLU_040795_0_0_6"/>
<dbReference type="BioCyc" id="MetaCyc:MONOMER-3861"/>
<dbReference type="BRENDA" id="1.14.13.25">
    <property type="organism ID" value="3305"/>
</dbReference>
<dbReference type="EvolutionaryTrace" id="P22869"/>
<dbReference type="Proteomes" id="UP000006821">
    <property type="component" value="Chromosome"/>
</dbReference>
<dbReference type="GO" id="GO:0046872">
    <property type="term" value="F:metal ion binding"/>
    <property type="evidence" value="ECO:0007669"/>
    <property type="project" value="UniProtKB-KW"/>
</dbReference>
<dbReference type="GO" id="GO:0015049">
    <property type="term" value="F:methane monooxygenase [NAD(P)H] activity"/>
    <property type="evidence" value="ECO:0007669"/>
    <property type="project" value="UniProtKB-EC"/>
</dbReference>
<dbReference type="GO" id="GO:0006730">
    <property type="term" value="P:one-carbon metabolic process"/>
    <property type="evidence" value="ECO:0007669"/>
    <property type="project" value="UniProtKB-KW"/>
</dbReference>
<dbReference type="CDD" id="cd01057">
    <property type="entry name" value="AAMH_A"/>
    <property type="match status" value="1"/>
</dbReference>
<dbReference type="Gene3D" id="1.10.620.20">
    <property type="entry name" value="Ribonucleotide Reductase, subunit A"/>
    <property type="match status" value="1"/>
</dbReference>
<dbReference type="InterPro" id="IPR009078">
    <property type="entry name" value="Ferritin-like_SF"/>
</dbReference>
<dbReference type="InterPro" id="IPR003430">
    <property type="entry name" value="Phenol_Hydrox"/>
</dbReference>
<dbReference type="InterPro" id="IPR012348">
    <property type="entry name" value="RNR-like"/>
</dbReference>
<dbReference type="Pfam" id="PF02332">
    <property type="entry name" value="Phenol_Hydrox"/>
    <property type="match status" value="1"/>
</dbReference>
<dbReference type="SUPFAM" id="SSF47240">
    <property type="entry name" value="Ferritin-like"/>
    <property type="match status" value="1"/>
</dbReference>
<sequence length="527" mass="60646">MALSTATKAATDALAANRAPTSVNAQEVHRWLQSFNWDFKNNRTKYATKYKMANETKEQFKLIAKEYARMEAVKDERQFGSLQDALTRLNAGVRVHPKWNETMKVVSNFLEVGEYNAIAATGMLWDSAQAAEQKNGYLAQVLDEIRHTHQCAYVNYYFAKNGQDPAGHNDARRTRTIGPLWKGMKRVFSDGFISGDAVECSLNLQLVGEACFTNPLIVAVTEWAAANGDEITPTVFLSIETDELRHMANGYQTVVSIANDPASAKYLNTDLNNAFWTQQKYFTPVLGMLFEYGSKFKVEPWVKTWNRWVYEDWGGIWIGRLGKYGVESPRSLKDAKQDAYWAHHDLYLLAYALWPTGFFRLALPDQEEMEWFEANYPGWYDHYGKIYEEWRARGCEDPSSGFIPLMWFIENNHPIYIDRVSQVPFCPSLAKGASTLRVHEYNGQMHTFSDQWGERMWLAEPERYECQNIFEQYEGRELSEVIAELHGLRSDGKTLIAQPHVRGDKLWTLDDIKRLNCVFKNPVKAFN</sequence>
<protein>
    <recommendedName>
        <fullName>Methane monooxygenase component A alpha chain</fullName>
        <ecNumber>1.14.13.25</ecNumber>
    </recommendedName>
    <alternativeName>
        <fullName>Methane hydroxylase</fullName>
    </alternativeName>
</protein>